<sequence length="256" mass="27335">MVALRLIPCLDVSNGRVVKGVNFVGLRDAGDPVELGCRYSKAGADELVFLDITATHEKRSTLVDMVRRTSEAVTIPFTVGGGISSLNGINELLRAGADKVSLNSSAVKDPSLISQGANRFGSQCIVVAIDAKKNKHIPNKWDVYVSGGRKNTGLDAIEWAEKIFEMGAGEILLTSMDGDGTQNGYDIELTRCISEKVSIPVIASGGAGSLSHIKDAFTLGKSSAALLASLLHDGQLTIREIKEYLIKENLPIRPIE</sequence>
<protein>
    <recommendedName>
        <fullName evidence="1">Imidazole glycerol phosphate synthase subunit HisF</fullName>
        <ecNumber evidence="1">4.3.2.10</ecNumber>
    </recommendedName>
    <alternativeName>
        <fullName evidence="1">IGP synthase cyclase subunit</fullName>
    </alternativeName>
    <alternativeName>
        <fullName evidence="1">IGP synthase subunit HisF</fullName>
    </alternativeName>
    <alternativeName>
        <fullName evidence="1">ImGP synthase subunit HisF</fullName>
        <shortName evidence="1">IGPS subunit HisF</shortName>
    </alternativeName>
</protein>
<keyword id="KW-0028">Amino-acid biosynthesis</keyword>
<keyword id="KW-0963">Cytoplasm</keyword>
<keyword id="KW-0368">Histidine biosynthesis</keyword>
<keyword id="KW-0456">Lyase</keyword>
<feature type="chain" id="PRO_1000063112" description="Imidazole glycerol phosphate synthase subunit HisF">
    <location>
        <begin position="1"/>
        <end position="256"/>
    </location>
</feature>
<feature type="active site" evidence="1">
    <location>
        <position position="11"/>
    </location>
</feature>
<feature type="active site" evidence="1">
    <location>
        <position position="130"/>
    </location>
</feature>
<organism>
    <name type="scientific">Prochlorococcus marinus (strain NATL1A)</name>
    <dbReference type="NCBI Taxonomy" id="167555"/>
    <lineage>
        <taxon>Bacteria</taxon>
        <taxon>Bacillati</taxon>
        <taxon>Cyanobacteriota</taxon>
        <taxon>Cyanophyceae</taxon>
        <taxon>Synechococcales</taxon>
        <taxon>Prochlorococcaceae</taxon>
        <taxon>Prochlorococcus</taxon>
    </lineage>
</organism>
<gene>
    <name evidence="1" type="primary">hisF</name>
    <name type="ordered locus">NATL1_04831</name>
</gene>
<reference key="1">
    <citation type="journal article" date="2007" name="PLoS Genet.">
        <title>Patterns and implications of gene gain and loss in the evolution of Prochlorococcus.</title>
        <authorList>
            <person name="Kettler G.C."/>
            <person name="Martiny A.C."/>
            <person name="Huang K."/>
            <person name="Zucker J."/>
            <person name="Coleman M.L."/>
            <person name="Rodrigue S."/>
            <person name="Chen F."/>
            <person name="Lapidus A."/>
            <person name="Ferriera S."/>
            <person name="Johnson J."/>
            <person name="Steglich C."/>
            <person name="Church G.M."/>
            <person name="Richardson P."/>
            <person name="Chisholm S.W."/>
        </authorList>
    </citation>
    <scope>NUCLEOTIDE SEQUENCE [LARGE SCALE GENOMIC DNA]</scope>
    <source>
        <strain>NATL1A</strain>
    </source>
</reference>
<proteinExistence type="inferred from homology"/>
<dbReference type="EC" id="4.3.2.10" evidence="1"/>
<dbReference type="EMBL" id="CP000553">
    <property type="protein sequence ID" value="ABM75047.1"/>
    <property type="molecule type" value="Genomic_DNA"/>
</dbReference>
<dbReference type="RefSeq" id="WP_011823231.1">
    <property type="nucleotide sequence ID" value="NC_008819.1"/>
</dbReference>
<dbReference type="SMR" id="A2C0N7"/>
<dbReference type="KEGG" id="pme:NATL1_04831"/>
<dbReference type="eggNOG" id="COG0107">
    <property type="taxonomic scope" value="Bacteria"/>
</dbReference>
<dbReference type="HOGENOM" id="CLU_048577_4_0_3"/>
<dbReference type="UniPathway" id="UPA00031">
    <property type="reaction ID" value="UER00010"/>
</dbReference>
<dbReference type="Proteomes" id="UP000002592">
    <property type="component" value="Chromosome"/>
</dbReference>
<dbReference type="GO" id="GO:0005737">
    <property type="term" value="C:cytoplasm"/>
    <property type="evidence" value="ECO:0007669"/>
    <property type="project" value="UniProtKB-SubCell"/>
</dbReference>
<dbReference type="GO" id="GO:0000107">
    <property type="term" value="F:imidazoleglycerol-phosphate synthase activity"/>
    <property type="evidence" value="ECO:0007669"/>
    <property type="project" value="UniProtKB-UniRule"/>
</dbReference>
<dbReference type="GO" id="GO:0016829">
    <property type="term" value="F:lyase activity"/>
    <property type="evidence" value="ECO:0007669"/>
    <property type="project" value="UniProtKB-KW"/>
</dbReference>
<dbReference type="GO" id="GO:0000105">
    <property type="term" value="P:L-histidine biosynthetic process"/>
    <property type="evidence" value="ECO:0007669"/>
    <property type="project" value="UniProtKB-UniRule"/>
</dbReference>
<dbReference type="CDD" id="cd04731">
    <property type="entry name" value="HisF"/>
    <property type="match status" value="1"/>
</dbReference>
<dbReference type="FunFam" id="3.20.20.70:FF:000006">
    <property type="entry name" value="Imidazole glycerol phosphate synthase subunit HisF"/>
    <property type="match status" value="1"/>
</dbReference>
<dbReference type="Gene3D" id="3.20.20.70">
    <property type="entry name" value="Aldolase class I"/>
    <property type="match status" value="1"/>
</dbReference>
<dbReference type="HAMAP" id="MF_01013">
    <property type="entry name" value="HisF"/>
    <property type="match status" value="1"/>
</dbReference>
<dbReference type="InterPro" id="IPR013785">
    <property type="entry name" value="Aldolase_TIM"/>
</dbReference>
<dbReference type="InterPro" id="IPR006062">
    <property type="entry name" value="His_biosynth"/>
</dbReference>
<dbReference type="InterPro" id="IPR004651">
    <property type="entry name" value="HisF"/>
</dbReference>
<dbReference type="InterPro" id="IPR050064">
    <property type="entry name" value="IGPS_HisA/HisF"/>
</dbReference>
<dbReference type="InterPro" id="IPR011060">
    <property type="entry name" value="RibuloseP-bd_barrel"/>
</dbReference>
<dbReference type="NCBIfam" id="TIGR00735">
    <property type="entry name" value="hisF"/>
    <property type="match status" value="1"/>
</dbReference>
<dbReference type="PANTHER" id="PTHR21235:SF2">
    <property type="entry name" value="IMIDAZOLE GLYCEROL PHOSPHATE SYNTHASE HISHF"/>
    <property type="match status" value="1"/>
</dbReference>
<dbReference type="PANTHER" id="PTHR21235">
    <property type="entry name" value="IMIDAZOLE GLYCEROL PHOSPHATE SYNTHASE SUBUNIT HISF/H IGP SYNTHASE SUBUNIT HISF/H"/>
    <property type="match status" value="1"/>
</dbReference>
<dbReference type="Pfam" id="PF00977">
    <property type="entry name" value="His_biosynth"/>
    <property type="match status" value="1"/>
</dbReference>
<dbReference type="SUPFAM" id="SSF51366">
    <property type="entry name" value="Ribulose-phoshate binding barrel"/>
    <property type="match status" value="1"/>
</dbReference>
<name>HIS6_PROM1</name>
<accession>A2C0N7</accession>
<evidence type="ECO:0000255" key="1">
    <source>
        <dbReference type="HAMAP-Rule" id="MF_01013"/>
    </source>
</evidence>
<comment type="function">
    <text evidence="1">IGPS catalyzes the conversion of PRFAR and glutamine to IGP, AICAR and glutamate. The HisF subunit catalyzes the cyclization activity that produces IGP and AICAR from PRFAR using the ammonia provided by the HisH subunit.</text>
</comment>
<comment type="catalytic activity">
    <reaction evidence="1">
        <text>5-[(5-phospho-1-deoxy-D-ribulos-1-ylimino)methylamino]-1-(5-phospho-beta-D-ribosyl)imidazole-4-carboxamide + L-glutamine = D-erythro-1-(imidazol-4-yl)glycerol 3-phosphate + 5-amino-1-(5-phospho-beta-D-ribosyl)imidazole-4-carboxamide + L-glutamate + H(+)</text>
        <dbReference type="Rhea" id="RHEA:24793"/>
        <dbReference type="ChEBI" id="CHEBI:15378"/>
        <dbReference type="ChEBI" id="CHEBI:29985"/>
        <dbReference type="ChEBI" id="CHEBI:58278"/>
        <dbReference type="ChEBI" id="CHEBI:58359"/>
        <dbReference type="ChEBI" id="CHEBI:58475"/>
        <dbReference type="ChEBI" id="CHEBI:58525"/>
        <dbReference type="EC" id="4.3.2.10"/>
    </reaction>
</comment>
<comment type="pathway">
    <text evidence="1">Amino-acid biosynthesis; L-histidine biosynthesis; L-histidine from 5-phospho-alpha-D-ribose 1-diphosphate: step 5/9.</text>
</comment>
<comment type="subunit">
    <text evidence="1">Heterodimer of HisH and HisF.</text>
</comment>
<comment type="subcellular location">
    <subcellularLocation>
        <location evidence="1">Cytoplasm</location>
    </subcellularLocation>
</comment>
<comment type="similarity">
    <text evidence="1">Belongs to the HisA/HisF family.</text>
</comment>